<comment type="function">
    <text evidence="2">Catalyzes the decarboxylation of L-3,4-dihydroxyphenylalanine (DOPA) to dopamine and L-5-hydroxytryptophan to serotonin.</text>
</comment>
<comment type="catalytic activity">
    <reaction evidence="2">
        <text>L-dopa + H(+) = dopamine + CO2</text>
        <dbReference type="Rhea" id="RHEA:12272"/>
        <dbReference type="ChEBI" id="CHEBI:15378"/>
        <dbReference type="ChEBI" id="CHEBI:16526"/>
        <dbReference type="ChEBI" id="CHEBI:57504"/>
        <dbReference type="ChEBI" id="CHEBI:59905"/>
        <dbReference type="EC" id="4.1.1.28"/>
    </reaction>
</comment>
<comment type="catalytic activity">
    <reaction evidence="2">
        <text>5-hydroxy-L-tryptophan + H(+) = serotonin + CO2</text>
        <dbReference type="Rhea" id="RHEA:18533"/>
        <dbReference type="ChEBI" id="CHEBI:15378"/>
        <dbReference type="ChEBI" id="CHEBI:16526"/>
        <dbReference type="ChEBI" id="CHEBI:58266"/>
        <dbReference type="ChEBI" id="CHEBI:350546"/>
        <dbReference type="EC" id="4.1.1.28"/>
    </reaction>
</comment>
<comment type="cofactor">
    <cofactor evidence="1">
        <name>pyridoxal 5'-phosphate</name>
        <dbReference type="ChEBI" id="CHEBI:597326"/>
    </cofactor>
</comment>
<comment type="pathway">
    <text evidence="2">Catecholamine biosynthesis; dopamine biosynthesis; dopamine from L-tyrosine: step 2/2.</text>
</comment>
<comment type="subunit">
    <text evidence="1">Homodimer.</text>
</comment>
<comment type="similarity">
    <text evidence="3">Belongs to the group II decarboxylase family.</text>
</comment>
<protein>
    <recommendedName>
        <fullName>Aromatic-L-amino-acid decarboxylase</fullName>
        <shortName>AADC</shortName>
        <ecNumber evidence="2">4.1.1.28</ecNumber>
    </recommendedName>
    <alternativeName>
        <fullName>DOPA decarboxylase</fullName>
        <shortName>DDC</shortName>
    </alternativeName>
</protein>
<accession>P27718</accession>
<accession>Q0V8S3</accession>
<gene>
    <name type="primary">DDC</name>
</gene>
<reference key="1">
    <citation type="journal article" date="1990" name="Brain Res. Mol. Brain Res.">
        <title>Deduced amino acid sequence of bovine aromatic L-amino acid decarboxylase: homology to other decarboxylases.</title>
        <authorList>
            <person name="Kang U."/>
            <person name="Joh T.H."/>
        </authorList>
    </citation>
    <scope>NUCLEOTIDE SEQUENCE [MRNA]</scope>
</reference>
<reference key="2">
    <citation type="journal article" date="2005" name="BMC Genomics">
        <title>Characterization of 954 bovine full-CDS cDNA sequences.</title>
        <authorList>
            <person name="Harhay G.P."/>
            <person name="Sonstegard T.S."/>
            <person name="Keele J.W."/>
            <person name="Heaton M.P."/>
            <person name="Clawson M.L."/>
            <person name="Snelling W.M."/>
            <person name="Wiedmann R.T."/>
            <person name="Van Tassell C.P."/>
            <person name="Smith T.P.L."/>
        </authorList>
    </citation>
    <scope>NUCLEOTIDE SEQUENCE [LARGE SCALE MRNA]</scope>
</reference>
<evidence type="ECO:0000250" key="1">
    <source>
        <dbReference type="UniProtKB" id="P20711"/>
    </source>
</evidence>
<evidence type="ECO:0000250" key="2">
    <source>
        <dbReference type="UniProtKB" id="P80041"/>
    </source>
</evidence>
<evidence type="ECO:0000305" key="3"/>
<sequence length="487" mass="54294">MNASEFRRRGKEMVDYVADYLEGIEGRQVFPDVDPGYLRPLIPTTAPQEPETFEAIIEDIEKIIMPGVTHWHSPYFFAYFPTASSYPAMLADMLCGAIGCIGFSWAASPACTELETVMMDWLGKMLQLPEAFLAGEAGEGGGVIQGTASEATLVALLAARTKVTRHLQAASPELMQAAIMEKLVAYASDQAHSSVEKAGLIGGVRLKAIPSDGKFAMRASALQEALERDKAAGLIPFFVVATLGTTSCCSFDNLLEVGPICHEEGLWLHVDAAYAGSAFICPEFRHLLNGVEFADSFNFNPHKWLLVNFDCSAMWVKKRTDLTGAFRLDPVYLRHSHQDSGLITDYRHWQLPLGRRFRSLKMWFVFRMYGVKGLQAYIRKHVQLSHAFEALVRQDTRFEICAEVILGLVCFRLKGSNKLNEALLESINSAKKIHLVPCSLRDRFVLRFAICSRTVELAHVQLAWEHIQEMAATVLRAQGEEKAEIKN</sequence>
<organism>
    <name type="scientific">Bos taurus</name>
    <name type="common">Bovine</name>
    <dbReference type="NCBI Taxonomy" id="9913"/>
    <lineage>
        <taxon>Eukaryota</taxon>
        <taxon>Metazoa</taxon>
        <taxon>Chordata</taxon>
        <taxon>Craniata</taxon>
        <taxon>Vertebrata</taxon>
        <taxon>Euteleostomi</taxon>
        <taxon>Mammalia</taxon>
        <taxon>Eutheria</taxon>
        <taxon>Laurasiatheria</taxon>
        <taxon>Artiodactyla</taxon>
        <taxon>Ruminantia</taxon>
        <taxon>Pecora</taxon>
        <taxon>Bovidae</taxon>
        <taxon>Bovinae</taxon>
        <taxon>Bos</taxon>
    </lineage>
</organism>
<name>DDC_BOVIN</name>
<dbReference type="EC" id="4.1.1.28" evidence="2"/>
<dbReference type="EMBL" id="M74029">
    <property type="protein sequence ID" value="AAC41615.1"/>
    <property type="molecule type" value="mRNA"/>
</dbReference>
<dbReference type="EMBL" id="BT026145">
    <property type="protein sequence ID" value="ABG66984.1"/>
    <property type="molecule type" value="mRNA"/>
</dbReference>
<dbReference type="PIR" id="A43758">
    <property type="entry name" value="A43758"/>
</dbReference>
<dbReference type="RefSeq" id="NP_776332.1">
    <property type="nucleotide sequence ID" value="NM_173907.2"/>
</dbReference>
<dbReference type="RefSeq" id="XP_010802269.1">
    <property type="nucleotide sequence ID" value="XM_010803967.1"/>
</dbReference>
<dbReference type="SMR" id="P27718"/>
<dbReference type="FunCoup" id="P27718">
    <property type="interactions" value="229"/>
</dbReference>
<dbReference type="STRING" id="9913.ENSBTAP00000062111"/>
<dbReference type="PaxDb" id="9913-ENSBTAP00000051814"/>
<dbReference type="GeneID" id="280762"/>
<dbReference type="KEGG" id="bta:280762"/>
<dbReference type="CTD" id="1644"/>
<dbReference type="eggNOG" id="KOG0628">
    <property type="taxonomic scope" value="Eukaryota"/>
</dbReference>
<dbReference type="InParanoid" id="P27718"/>
<dbReference type="OrthoDB" id="639767at2759"/>
<dbReference type="UniPathway" id="UPA00747">
    <property type="reaction ID" value="UER00734"/>
</dbReference>
<dbReference type="Proteomes" id="UP000009136">
    <property type="component" value="Unplaced"/>
</dbReference>
<dbReference type="GO" id="GO:0005737">
    <property type="term" value="C:cytoplasm"/>
    <property type="evidence" value="ECO:0000318"/>
    <property type="project" value="GO_Central"/>
</dbReference>
<dbReference type="GO" id="GO:0036467">
    <property type="term" value="F:5-hydroxy-L-tryptophan decarboxylase activity"/>
    <property type="evidence" value="ECO:0007669"/>
    <property type="project" value="RHEA"/>
</dbReference>
<dbReference type="GO" id="GO:0004058">
    <property type="term" value="F:aromatic-L-amino-acid decarboxylase activity"/>
    <property type="evidence" value="ECO:0000318"/>
    <property type="project" value="GO_Central"/>
</dbReference>
<dbReference type="GO" id="GO:0036468">
    <property type="term" value="F:L-dopa decarboxylase activity"/>
    <property type="evidence" value="ECO:0007669"/>
    <property type="project" value="RHEA"/>
</dbReference>
<dbReference type="GO" id="GO:0030170">
    <property type="term" value="F:pyridoxal phosphate binding"/>
    <property type="evidence" value="ECO:0007669"/>
    <property type="project" value="InterPro"/>
</dbReference>
<dbReference type="GO" id="GO:0006520">
    <property type="term" value="P:amino acid metabolic process"/>
    <property type="evidence" value="ECO:0007669"/>
    <property type="project" value="InterPro"/>
</dbReference>
<dbReference type="GO" id="GO:0019752">
    <property type="term" value="P:carboxylic acid metabolic process"/>
    <property type="evidence" value="ECO:0007669"/>
    <property type="project" value="InterPro"/>
</dbReference>
<dbReference type="GO" id="GO:0006584">
    <property type="term" value="P:catecholamine metabolic process"/>
    <property type="evidence" value="ECO:0000318"/>
    <property type="project" value="GO_Central"/>
</dbReference>
<dbReference type="GO" id="GO:0042416">
    <property type="term" value="P:dopamine biosynthetic process"/>
    <property type="evidence" value="ECO:0007669"/>
    <property type="project" value="UniProtKB-UniPathway"/>
</dbReference>
<dbReference type="GO" id="GO:0042427">
    <property type="term" value="P:serotonin biosynthetic process"/>
    <property type="evidence" value="ECO:0000318"/>
    <property type="project" value="GO_Central"/>
</dbReference>
<dbReference type="CDD" id="cd06450">
    <property type="entry name" value="DOPA_deC_like"/>
    <property type="match status" value="1"/>
</dbReference>
<dbReference type="FunFam" id="1.20.1340.10:FF:000001">
    <property type="entry name" value="Histidine decarboxylase"/>
    <property type="match status" value="1"/>
</dbReference>
<dbReference type="FunFam" id="3.40.640.10:FF:000025">
    <property type="entry name" value="Histidine decarboxylase"/>
    <property type="match status" value="1"/>
</dbReference>
<dbReference type="FunFam" id="3.90.1150.10:FF:000018">
    <property type="entry name" value="Histidine decarboxylase"/>
    <property type="match status" value="1"/>
</dbReference>
<dbReference type="Gene3D" id="3.90.1150.10">
    <property type="entry name" value="Aspartate Aminotransferase, domain 1"/>
    <property type="match status" value="1"/>
</dbReference>
<dbReference type="Gene3D" id="1.20.1340.10">
    <property type="entry name" value="dopa decarboxylase, N-terminal domain"/>
    <property type="match status" value="1"/>
</dbReference>
<dbReference type="Gene3D" id="3.40.640.10">
    <property type="entry name" value="Type I PLP-dependent aspartate aminotransferase-like (Major domain)"/>
    <property type="match status" value="1"/>
</dbReference>
<dbReference type="InterPro" id="IPR010977">
    <property type="entry name" value="Aromatic_deC"/>
</dbReference>
<dbReference type="InterPro" id="IPR002129">
    <property type="entry name" value="PyrdxlP-dep_de-COase"/>
</dbReference>
<dbReference type="InterPro" id="IPR015424">
    <property type="entry name" value="PyrdxlP-dep_Trfase"/>
</dbReference>
<dbReference type="InterPro" id="IPR015421">
    <property type="entry name" value="PyrdxlP-dep_Trfase_major"/>
</dbReference>
<dbReference type="InterPro" id="IPR015422">
    <property type="entry name" value="PyrdxlP-dep_Trfase_small"/>
</dbReference>
<dbReference type="InterPro" id="IPR021115">
    <property type="entry name" value="Pyridoxal-P_BS"/>
</dbReference>
<dbReference type="PANTHER" id="PTHR11999:SF167">
    <property type="entry name" value="AROMATIC-L-AMINO-ACID DECARBOXYLASE"/>
    <property type="match status" value="1"/>
</dbReference>
<dbReference type="PANTHER" id="PTHR11999">
    <property type="entry name" value="GROUP II PYRIDOXAL-5-PHOSPHATE DECARBOXYLASE"/>
    <property type="match status" value="1"/>
</dbReference>
<dbReference type="Pfam" id="PF00282">
    <property type="entry name" value="Pyridoxal_deC"/>
    <property type="match status" value="1"/>
</dbReference>
<dbReference type="PRINTS" id="PR00800">
    <property type="entry name" value="YHDCRBOXLASE"/>
</dbReference>
<dbReference type="SUPFAM" id="SSF53383">
    <property type="entry name" value="PLP-dependent transferases"/>
    <property type="match status" value="1"/>
</dbReference>
<dbReference type="PROSITE" id="PS00392">
    <property type="entry name" value="DDC_GAD_HDC_YDC"/>
    <property type="match status" value="1"/>
</dbReference>
<keyword id="KW-0007">Acetylation</keyword>
<keyword id="KW-0127">Catecholamine biosynthesis</keyword>
<keyword id="KW-0210">Decarboxylase</keyword>
<keyword id="KW-0456">Lyase</keyword>
<keyword id="KW-0663">Pyridoxal phosphate</keyword>
<keyword id="KW-1185">Reference proteome</keyword>
<keyword id="KW-0677">Repeat</keyword>
<proteinExistence type="evidence at transcript level"/>
<feature type="chain" id="PRO_0000146937" description="Aromatic-L-amino-acid decarboxylase">
    <location>
        <begin position="1"/>
        <end position="487"/>
    </location>
</feature>
<feature type="repeat" description="1">
    <location>
        <begin position="58"/>
        <end position="115"/>
    </location>
</feature>
<feature type="repeat" description="2">
    <location>
        <begin position="118"/>
        <end position="178"/>
    </location>
</feature>
<feature type="region of interest" description="2 X approximate tandem repeats">
    <location>
        <begin position="58"/>
        <end position="178"/>
    </location>
</feature>
<feature type="binding site" evidence="2">
    <location>
        <position position="82"/>
    </location>
    <ligand>
        <name>substrate</name>
    </ligand>
</feature>
<feature type="binding site" evidence="1">
    <location>
        <position position="148"/>
    </location>
    <ligand>
        <name>pyridoxal 5'-phosphate</name>
        <dbReference type="ChEBI" id="CHEBI:597326"/>
    </ligand>
</feature>
<feature type="binding site" evidence="1">
    <location>
        <position position="149"/>
    </location>
    <ligand>
        <name>pyridoxal 5'-phosphate</name>
        <dbReference type="ChEBI" id="CHEBI:597326"/>
    </ligand>
</feature>
<feature type="binding site" evidence="2">
    <location>
        <position position="192"/>
    </location>
    <ligand>
        <name>substrate</name>
    </ligand>
</feature>
<feature type="binding site" evidence="1">
    <location>
        <position position="246"/>
    </location>
    <ligand>
        <name>pyridoxal 5'-phosphate</name>
        <dbReference type="ChEBI" id="CHEBI:597326"/>
    </ligand>
</feature>
<feature type="binding site" evidence="1">
    <location>
        <position position="300"/>
    </location>
    <ligand>
        <name>pyridoxal 5'-phosphate</name>
        <dbReference type="ChEBI" id="CHEBI:597326"/>
    </ligand>
</feature>
<feature type="modified residue" description="N-acetylmethionine" evidence="2">
    <location>
        <position position="1"/>
    </location>
</feature>
<feature type="modified residue" description="N6-(pyridoxal phosphate)lysine" evidence="2">
    <location>
        <position position="303"/>
    </location>
</feature>
<feature type="sequence conflict" description="In Ref. 1; AAC41615." evidence="3" ref="1">
    <original>AS</original>
    <variation>RA</variation>
    <location>
        <begin position="170"/>
        <end position="171"/>
    </location>
</feature>
<feature type="sequence conflict" description="In Ref. 1; AAC41615." evidence="3" ref="1">
    <original>M</original>
    <variation>T</variation>
    <location>
        <position position="175"/>
    </location>
</feature>
<feature type="sequence conflict" description="In Ref. 1; AAC41615." evidence="3" ref="1">
    <original>ALQEA</original>
    <variation>RCRR</variation>
    <location>
        <begin position="221"/>
        <end position="225"/>
    </location>
</feature>
<feature type="sequence conflict" description="In Ref. 1; AAC41615." evidence="3" ref="1">
    <original>F</original>
    <variation>SC</variation>
    <location>
        <position position="237"/>
    </location>
</feature>
<feature type="sequence conflict" description="In Ref. 1; AAC41615." evidence="3" ref="1">
    <original>E</original>
    <variation>K</variation>
    <location>
        <position position="263"/>
    </location>
</feature>